<organism>
    <name type="scientific">Androctonus amoreuxi</name>
    <name type="common">African fattail scorpion</name>
    <name type="synonym">Scorpio amoreuxi</name>
    <dbReference type="NCBI Taxonomy" id="112024"/>
    <lineage>
        <taxon>Eukaryota</taxon>
        <taxon>Metazoa</taxon>
        <taxon>Ecdysozoa</taxon>
        <taxon>Arthropoda</taxon>
        <taxon>Chelicerata</taxon>
        <taxon>Arachnida</taxon>
        <taxon>Scorpiones</taxon>
        <taxon>Buthida</taxon>
        <taxon>Buthoidea</taxon>
        <taxon>Buthidae</taxon>
        <taxon>Androctonus</taxon>
    </lineage>
</organism>
<feature type="signal peptide" evidence="3">
    <location>
        <begin position="1"/>
        <end position="20"/>
    </location>
</feature>
<feature type="chain" id="PRO_0000035215" description="Toxin Aam2">
    <location>
        <begin position="21"/>
        <end position="84"/>
    </location>
</feature>
<feature type="domain" description="LCN-type CS-alpha/beta" evidence="2">
    <location>
        <begin position="22"/>
        <end position="84"/>
    </location>
</feature>
<feature type="modified residue" description="Asparagine amide" evidence="5">
    <location>
        <position position="84"/>
    </location>
</feature>
<feature type="disulfide bond" evidence="2">
    <location>
        <begin position="32"/>
        <end position="83"/>
    </location>
</feature>
<feature type="disulfide bond" evidence="2">
    <location>
        <begin position="36"/>
        <end position="56"/>
    </location>
</feature>
<feature type="disulfide bond" evidence="2">
    <location>
        <begin position="42"/>
        <end position="66"/>
    </location>
</feature>
<feature type="disulfide bond" evidence="2">
    <location>
        <begin position="46"/>
        <end position="68"/>
    </location>
</feature>
<reference key="1">
    <citation type="journal article" date="2003" name="Regul. Pept.">
        <title>Isolation of scorpion (Androctonus amoreuxi) putative alpha neurotoxins and parallel cloning of their respective cDNAs from a single sample of venom.</title>
        <authorList>
            <person name="Chen T."/>
            <person name="Folan R."/>
            <person name="Kwok H."/>
            <person name="O'Kane E.J."/>
            <person name="Bjourson A.J."/>
            <person name="Shaw C."/>
        </authorList>
    </citation>
    <scope>NUCLEOTIDE SEQUENCE [MRNA]</scope>
    <scope>AMIDATION AT ASN-84</scope>
    <scope>PROTEIN SEQUENCE OF 21-84</scope>
    <source>
        <tissue>Venom</tissue>
        <tissue>Venom gland</tissue>
    </source>
</reference>
<evidence type="ECO:0000250" key="1"/>
<evidence type="ECO:0000255" key="2">
    <source>
        <dbReference type="PROSITE-ProRule" id="PRU01210"/>
    </source>
</evidence>
<evidence type="ECO:0000269" key="3">
    <source>
    </source>
</evidence>
<evidence type="ECO:0000305" key="4"/>
<evidence type="ECO:0000305" key="5">
    <source>
    </source>
</evidence>
<comment type="function">
    <text evidence="1">Alpha toxins bind voltage-independently at site-3 of sodium channels (Nav) and inhibit the inactivation of the activated channels, thereby blocking neuronal transmission.</text>
</comment>
<comment type="subcellular location">
    <subcellularLocation>
        <location>Secreted</location>
    </subcellularLocation>
</comment>
<comment type="tissue specificity">
    <text>Expressed by the venom gland.</text>
</comment>
<comment type="domain">
    <text evidence="4">Has the structural arrangement of an alpha-helix connected to antiparallel beta-sheets by disulfide bonds (CS-alpha/beta).</text>
</comment>
<comment type="similarity">
    <text evidence="4">Belongs to the long (4 C-C) scorpion toxin superfamily. Sodium channel inhibitor family. Alpha subfamily.</text>
</comment>
<accession>Q86SE0</accession>
<dbReference type="EMBL" id="AJ536596">
    <property type="protein sequence ID" value="CAD60540.1"/>
    <property type="molecule type" value="mRNA"/>
</dbReference>
<dbReference type="SMR" id="Q86SE0"/>
<dbReference type="GO" id="GO:0005576">
    <property type="term" value="C:extracellular region"/>
    <property type="evidence" value="ECO:0007669"/>
    <property type="project" value="UniProtKB-SubCell"/>
</dbReference>
<dbReference type="GO" id="GO:0019871">
    <property type="term" value="F:sodium channel inhibitor activity"/>
    <property type="evidence" value="ECO:0007669"/>
    <property type="project" value="InterPro"/>
</dbReference>
<dbReference type="GO" id="GO:0090729">
    <property type="term" value="F:toxin activity"/>
    <property type="evidence" value="ECO:0007669"/>
    <property type="project" value="UniProtKB-KW"/>
</dbReference>
<dbReference type="GO" id="GO:0006952">
    <property type="term" value="P:defense response"/>
    <property type="evidence" value="ECO:0007669"/>
    <property type="project" value="InterPro"/>
</dbReference>
<dbReference type="CDD" id="cd23106">
    <property type="entry name" value="neurotoxins_LC_scorpion"/>
    <property type="match status" value="1"/>
</dbReference>
<dbReference type="FunFam" id="3.30.30.10:FF:000002">
    <property type="entry name" value="Alpha-like toxin BmK-M1"/>
    <property type="match status" value="1"/>
</dbReference>
<dbReference type="Gene3D" id="3.30.30.10">
    <property type="entry name" value="Knottin, scorpion toxin-like"/>
    <property type="match status" value="1"/>
</dbReference>
<dbReference type="InterPro" id="IPR044062">
    <property type="entry name" value="LCN-type_CS_alpha_beta_dom"/>
</dbReference>
<dbReference type="InterPro" id="IPR003614">
    <property type="entry name" value="Scorpion_toxin-like"/>
</dbReference>
<dbReference type="InterPro" id="IPR036574">
    <property type="entry name" value="Scorpion_toxin-like_sf"/>
</dbReference>
<dbReference type="InterPro" id="IPR018218">
    <property type="entry name" value="Scorpion_toxinL"/>
</dbReference>
<dbReference type="InterPro" id="IPR002061">
    <property type="entry name" value="Scorpion_toxinL/defensin"/>
</dbReference>
<dbReference type="Pfam" id="PF00537">
    <property type="entry name" value="Toxin_3"/>
    <property type="match status" value="1"/>
</dbReference>
<dbReference type="PRINTS" id="PR00285">
    <property type="entry name" value="SCORPNTOXIN"/>
</dbReference>
<dbReference type="SMART" id="SM00505">
    <property type="entry name" value="Knot1"/>
    <property type="match status" value="1"/>
</dbReference>
<dbReference type="SUPFAM" id="SSF57095">
    <property type="entry name" value="Scorpion toxin-like"/>
    <property type="match status" value="1"/>
</dbReference>
<dbReference type="PROSITE" id="PS51863">
    <property type="entry name" value="LCN_CSAB"/>
    <property type="match status" value="1"/>
</dbReference>
<sequence length="86" mass="9283">MNYLITISLALLLMTGVASGVRDGYIADAGNCGYTCVANDYCNTECTKNGAESGYCQWFGRYGNACWCIKLPDKVPIKVPGKCNGR</sequence>
<keyword id="KW-0027">Amidation</keyword>
<keyword id="KW-0903">Direct protein sequencing</keyword>
<keyword id="KW-1015">Disulfide bond</keyword>
<keyword id="KW-0872">Ion channel impairing toxin</keyword>
<keyword id="KW-0528">Neurotoxin</keyword>
<keyword id="KW-0964">Secreted</keyword>
<keyword id="KW-0732">Signal</keyword>
<keyword id="KW-0800">Toxin</keyword>
<keyword id="KW-0738">Voltage-gated sodium channel impairing toxin</keyword>
<name>SCX2_ANDAM</name>
<protein>
    <recommendedName>
        <fullName>Toxin Aam2</fullName>
    </recommendedName>
    <alternativeName>
        <fullName>AamH2</fullName>
    </alternativeName>
    <alternativeName>
        <fullName>Alpha-neurotoxin 2</fullName>
    </alternativeName>
</protein>
<proteinExistence type="evidence at protein level"/>